<accession>Q87AP4</accession>
<name>MIAB_XYLFT</name>
<dbReference type="EC" id="2.8.4.3" evidence="1"/>
<dbReference type="EMBL" id="AE009442">
    <property type="protein sequence ID" value="AAO29613.1"/>
    <property type="status" value="ALT_INIT"/>
    <property type="molecule type" value="Genomic_DNA"/>
</dbReference>
<dbReference type="RefSeq" id="WP_004089609.1">
    <property type="nucleotide sequence ID" value="NC_004556.1"/>
</dbReference>
<dbReference type="SMR" id="Q87AP4"/>
<dbReference type="GeneID" id="93905628"/>
<dbReference type="KEGG" id="xft:PD_1779"/>
<dbReference type="HOGENOM" id="CLU_018697_2_0_6"/>
<dbReference type="Proteomes" id="UP000002516">
    <property type="component" value="Chromosome"/>
</dbReference>
<dbReference type="GO" id="GO:0005829">
    <property type="term" value="C:cytosol"/>
    <property type="evidence" value="ECO:0007669"/>
    <property type="project" value="TreeGrafter"/>
</dbReference>
<dbReference type="GO" id="GO:0051539">
    <property type="term" value="F:4 iron, 4 sulfur cluster binding"/>
    <property type="evidence" value="ECO:0007669"/>
    <property type="project" value="UniProtKB-UniRule"/>
</dbReference>
<dbReference type="GO" id="GO:0046872">
    <property type="term" value="F:metal ion binding"/>
    <property type="evidence" value="ECO:0007669"/>
    <property type="project" value="UniProtKB-KW"/>
</dbReference>
<dbReference type="GO" id="GO:0035597">
    <property type="term" value="F:N6-isopentenyladenosine methylthiotransferase activity"/>
    <property type="evidence" value="ECO:0007669"/>
    <property type="project" value="TreeGrafter"/>
</dbReference>
<dbReference type="CDD" id="cd01335">
    <property type="entry name" value="Radical_SAM"/>
    <property type="match status" value="1"/>
</dbReference>
<dbReference type="FunFam" id="3.40.50.12160:FF:000001">
    <property type="entry name" value="tRNA-2-methylthio-N(6)-dimethylallyladenosine synthase"/>
    <property type="match status" value="1"/>
</dbReference>
<dbReference type="FunFam" id="3.80.30.20:FF:000001">
    <property type="entry name" value="tRNA-2-methylthio-N(6)-dimethylallyladenosine synthase 2"/>
    <property type="match status" value="1"/>
</dbReference>
<dbReference type="Gene3D" id="3.40.50.12160">
    <property type="entry name" value="Methylthiotransferase, N-terminal domain"/>
    <property type="match status" value="1"/>
</dbReference>
<dbReference type="Gene3D" id="3.80.30.20">
    <property type="entry name" value="tm_1862 like domain"/>
    <property type="match status" value="1"/>
</dbReference>
<dbReference type="HAMAP" id="MF_01864">
    <property type="entry name" value="tRNA_metthiotr_MiaB"/>
    <property type="match status" value="1"/>
</dbReference>
<dbReference type="InterPro" id="IPR006638">
    <property type="entry name" value="Elp3/MiaA/NifB-like_rSAM"/>
</dbReference>
<dbReference type="InterPro" id="IPR005839">
    <property type="entry name" value="Methylthiotransferase"/>
</dbReference>
<dbReference type="InterPro" id="IPR020612">
    <property type="entry name" value="Methylthiotransferase_CS"/>
</dbReference>
<dbReference type="InterPro" id="IPR013848">
    <property type="entry name" value="Methylthiotransferase_N"/>
</dbReference>
<dbReference type="InterPro" id="IPR038135">
    <property type="entry name" value="Methylthiotransferase_N_sf"/>
</dbReference>
<dbReference type="InterPro" id="IPR006463">
    <property type="entry name" value="MiaB_methiolase"/>
</dbReference>
<dbReference type="InterPro" id="IPR007197">
    <property type="entry name" value="rSAM"/>
</dbReference>
<dbReference type="InterPro" id="IPR023404">
    <property type="entry name" value="rSAM_horseshoe"/>
</dbReference>
<dbReference type="InterPro" id="IPR002792">
    <property type="entry name" value="TRAM_dom"/>
</dbReference>
<dbReference type="NCBIfam" id="TIGR01574">
    <property type="entry name" value="miaB-methiolase"/>
    <property type="match status" value="1"/>
</dbReference>
<dbReference type="NCBIfam" id="TIGR00089">
    <property type="entry name" value="MiaB/RimO family radical SAM methylthiotransferase"/>
    <property type="match status" value="1"/>
</dbReference>
<dbReference type="PANTHER" id="PTHR43020">
    <property type="entry name" value="CDK5 REGULATORY SUBUNIT-ASSOCIATED PROTEIN 1"/>
    <property type="match status" value="1"/>
</dbReference>
<dbReference type="PANTHER" id="PTHR43020:SF2">
    <property type="entry name" value="MITOCHONDRIAL TRNA METHYLTHIOTRANSFERASE CDK5RAP1"/>
    <property type="match status" value="1"/>
</dbReference>
<dbReference type="Pfam" id="PF04055">
    <property type="entry name" value="Radical_SAM"/>
    <property type="match status" value="1"/>
</dbReference>
<dbReference type="Pfam" id="PF01938">
    <property type="entry name" value="TRAM"/>
    <property type="match status" value="1"/>
</dbReference>
<dbReference type="Pfam" id="PF00919">
    <property type="entry name" value="UPF0004"/>
    <property type="match status" value="1"/>
</dbReference>
<dbReference type="SFLD" id="SFLDF00273">
    <property type="entry name" value="(dimethylallyl)adenosine_tRNA"/>
    <property type="match status" value="1"/>
</dbReference>
<dbReference type="SFLD" id="SFLDG01082">
    <property type="entry name" value="B12-binding_domain_containing"/>
    <property type="match status" value="1"/>
</dbReference>
<dbReference type="SFLD" id="SFLDG01061">
    <property type="entry name" value="methylthiotransferase"/>
    <property type="match status" value="1"/>
</dbReference>
<dbReference type="SMART" id="SM00729">
    <property type="entry name" value="Elp3"/>
    <property type="match status" value="1"/>
</dbReference>
<dbReference type="SUPFAM" id="SSF102114">
    <property type="entry name" value="Radical SAM enzymes"/>
    <property type="match status" value="1"/>
</dbReference>
<dbReference type="PROSITE" id="PS51449">
    <property type="entry name" value="MTTASE_N"/>
    <property type="match status" value="1"/>
</dbReference>
<dbReference type="PROSITE" id="PS01278">
    <property type="entry name" value="MTTASE_RADICAL"/>
    <property type="match status" value="1"/>
</dbReference>
<dbReference type="PROSITE" id="PS51918">
    <property type="entry name" value="RADICAL_SAM"/>
    <property type="match status" value="1"/>
</dbReference>
<dbReference type="PROSITE" id="PS50926">
    <property type="entry name" value="TRAM"/>
    <property type="match status" value="1"/>
</dbReference>
<feature type="chain" id="PRO_0000374653" description="tRNA-2-methylthio-N(6)-dimethylallyladenosine synthase">
    <location>
        <begin position="1"/>
        <end position="497"/>
    </location>
</feature>
<feature type="domain" description="MTTase N-terminal" evidence="1">
    <location>
        <begin position="48"/>
        <end position="165"/>
    </location>
</feature>
<feature type="domain" description="Radical SAM core" evidence="2">
    <location>
        <begin position="188"/>
        <end position="430"/>
    </location>
</feature>
<feature type="domain" description="TRAM" evidence="1">
    <location>
        <begin position="433"/>
        <end position="496"/>
    </location>
</feature>
<feature type="region of interest" description="Disordered" evidence="3">
    <location>
        <begin position="1"/>
        <end position="48"/>
    </location>
</feature>
<feature type="compositionally biased region" description="Low complexity" evidence="3">
    <location>
        <begin position="18"/>
        <end position="28"/>
    </location>
</feature>
<feature type="binding site" evidence="1">
    <location>
        <position position="57"/>
    </location>
    <ligand>
        <name>[4Fe-4S] cluster</name>
        <dbReference type="ChEBI" id="CHEBI:49883"/>
        <label>1</label>
    </ligand>
</feature>
<feature type="binding site" evidence="1">
    <location>
        <position position="94"/>
    </location>
    <ligand>
        <name>[4Fe-4S] cluster</name>
        <dbReference type="ChEBI" id="CHEBI:49883"/>
        <label>1</label>
    </ligand>
</feature>
<feature type="binding site" evidence="1">
    <location>
        <position position="128"/>
    </location>
    <ligand>
        <name>[4Fe-4S] cluster</name>
        <dbReference type="ChEBI" id="CHEBI:49883"/>
        <label>1</label>
    </ligand>
</feature>
<feature type="binding site" evidence="1">
    <location>
        <position position="202"/>
    </location>
    <ligand>
        <name>[4Fe-4S] cluster</name>
        <dbReference type="ChEBI" id="CHEBI:49883"/>
        <label>2</label>
        <note>4Fe-4S-S-AdoMet</note>
    </ligand>
</feature>
<feature type="binding site" evidence="1">
    <location>
        <position position="206"/>
    </location>
    <ligand>
        <name>[4Fe-4S] cluster</name>
        <dbReference type="ChEBI" id="CHEBI:49883"/>
        <label>2</label>
        <note>4Fe-4S-S-AdoMet</note>
    </ligand>
</feature>
<feature type="binding site" evidence="1">
    <location>
        <position position="209"/>
    </location>
    <ligand>
        <name>[4Fe-4S] cluster</name>
        <dbReference type="ChEBI" id="CHEBI:49883"/>
        <label>2</label>
        <note>4Fe-4S-S-AdoMet</note>
    </ligand>
</feature>
<keyword id="KW-0004">4Fe-4S</keyword>
<keyword id="KW-0963">Cytoplasm</keyword>
<keyword id="KW-0408">Iron</keyword>
<keyword id="KW-0411">Iron-sulfur</keyword>
<keyword id="KW-0479">Metal-binding</keyword>
<keyword id="KW-1185">Reference proteome</keyword>
<keyword id="KW-0949">S-adenosyl-L-methionine</keyword>
<keyword id="KW-0808">Transferase</keyword>
<keyword id="KW-0819">tRNA processing</keyword>
<proteinExistence type="inferred from homology"/>
<organism>
    <name type="scientific">Xylella fastidiosa (strain Temecula1 / ATCC 700964)</name>
    <dbReference type="NCBI Taxonomy" id="183190"/>
    <lineage>
        <taxon>Bacteria</taxon>
        <taxon>Pseudomonadati</taxon>
        <taxon>Pseudomonadota</taxon>
        <taxon>Gammaproteobacteria</taxon>
        <taxon>Lysobacterales</taxon>
        <taxon>Lysobacteraceae</taxon>
        <taxon>Xylella</taxon>
    </lineage>
</organism>
<protein>
    <recommendedName>
        <fullName evidence="1">tRNA-2-methylthio-N(6)-dimethylallyladenosine synthase</fullName>
        <ecNumber evidence="1">2.8.4.3</ecNumber>
    </recommendedName>
    <alternativeName>
        <fullName evidence="1">(Dimethylallyl)adenosine tRNA methylthiotransferase MiaB</fullName>
    </alternativeName>
    <alternativeName>
        <fullName evidence="1">tRNA-i(6)A37 methylthiotransferase</fullName>
    </alternativeName>
</protein>
<comment type="function">
    <text evidence="1">Catalyzes the methylthiolation of N6-(dimethylallyl)adenosine (i(6)A), leading to the formation of 2-methylthio-N6-(dimethylallyl)adenosine (ms(2)i(6)A) at position 37 in tRNAs that read codons beginning with uridine.</text>
</comment>
<comment type="catalytic activity">
    <reaction evidence="1">
        <text>N(6)-dimethylallyladenosine(37) in tRNA + (sulfur carrier)-SH + AH2 + 2 S-adenosyl-L-methionine = 2-methylsulfanyl-N(6)-dimethylallyladenosine(37) in tRNA + (sulfur carrier)-H + 5'-deoxyadenosine + L-methionine + A + S-adenosyl-L-homocysteine + 2 H(+)</text>
        <dbReference type="Rhea" id="RHEA:37067"/>
        <dbReference type="Rhea" id="RHEA-COMP:10375"/>
        <dbReference type="Rhea" id="RHEA-COMP:10376"/>
        <dbReference type="Rhea" id="RHEA-COMP:14737"/>
        <dbReference type="Rhea" id="RHEA-COMP:14739"/>
        <dbReference type="ChEBI" id="CHEBI:13193"/>
        <dbReference type="ChEBI" id="CHEBI:15378"/>
        <dbReference type="ChEBI" id="CHEBI:17319"/>
        <dbReference type="ChEBI" id="CHEBI:17499"/>
        <dbReference type="ChEBI" id="CHEBI:29917"/>
        <dbReference type="ChEBI" id="CHEBI:57844"/>
        <dbReference type="ChEBI" id="CHEBI:57856"/>
        <dbReference type="ChEBI" id="CHEBI:59789"/>
        <dbReference type="ChEBI" id="CHEBI:64428"/>
        <dbReference type="ChEBI" id="CHEBI:74415"/>
        <dbReference type="ChEBI" id="CHEBI:74417"/>
        <dbReference type="EC" id="2.8.4.3"/>
    </reaction>
</comment>
<comment type="cofactor">
    <cofactor evidence="1">
        <name>[4Fe-4S] cluster</name>
        <dbReference type="ChEBI" id="CHEBI:49883"/>
    </cofactor>
    <text evidence="1">Binds 2 [4Fe-4S] clusters. One cluster is coordinated with 3 cysteines and an exchangeable S-adenosyl-L-methionine.</text>
</comment>
<comment type="subunit">
    <text evidence="1">Monomer.</text>
</comment>
<comment type="subcellular location">
    <subcellularLocation>
        <location evidence="1">Cytoplasm</location>
    </subcellularLocation>
</comment>
<comment type="similarity">
    <text evidence="1">Belongs to the methylthiotransferase family. MiaB subfamily.</text>
</comment>
<comment type="sequence caution" evidence="4">
    <conflict type="erroneous initiation">
        <sequence resource="EMBL-CDS" id="AAO29613"/>
    </conflict>
</comment>
<sequence>MTGTSNIPTHGKEHKDAPALLPLPAPNTHHTHAAHPGDPSHDRHPSRGKLFIKTHGCQMNEYDSAKMADVLTTTEALELTDNPEEADIILINTCSIREKAQEKVFSQLGRWRALKTNGRDVIIGVGGCVASQEGETIVKRAPYVDLVFGPQTLHRLPDMIRARREQNRPQVDISFPEIEKFDHLPTPRAEGPSAFVSIMEGCSKYCSFCVVPYTRGEEVSRPFEDVLTEIAHLATQGVREINLLGQNVNAYRGAMDPGPSNNTNPAPPPYADLGLLIRAIAQFESIGRIRFTTSHPLEFSDSLVEAYRDVPQLANHLHLPVQSGSDRILSAMKRGYTALEFKSKIRKLRAVRPDISISSDFIIGFPGESDTDFQKTMQLIKDIGFDQSFSFIYSRRPGTPASNLEDHTPDEIKRTRLEHLQKHINAYAADISKRMIGTVQTVLVEGPSKKNPNELTGKTENMRPVNFPGHPRLIGQFIDVHITEALTNSLRGRVHTN</sequence>
<evidence type="ECO:0000255" key="1">
    <source>
        <dbReference type="HAMAP-Rule" id="MF_01864"/>
    </source>
</evidence>
<evidence type="ECO:0000255" key="2">
    <source>
        <dbReference type="PROSITE-ProRule" id="PRU01266"/>
    </source>
</evidence>
<evidence type="ECO:0000256" key="3">
    <source>
        <dbReference type="SAM" id="MobiDB-lite"/>
    </source>
</evidence>
<evidence type="ECO:0000305" key="4"/>
<reference key="1">
    <citation type="journal article" date="2003" name="J. Bacteriol.">
        <title>Comparative analyses of the complete genome sequences of Pierce's disease and citrus variegated chlorosis strains of Xylella fastidiosa.</title>
        <authorList>
            <person name="Van Sluys M.A."/>
            <person name="de Oliveira M.C."/>
            <person name="Monteiro-Vitorello C.B."/>
            <person name="Miyaki C.Y."/>
            <person name="Furlan L.R."/>
            <person name="Camargo L.E.A."/>
            <person name="da Silva A.C.R."/>
            <person name="Moon D.H."/>
            <person name="Takita M.A."/>
            <person name="Lemos E.G.M."/>
            <person name="Machado M.A."/>
            <person name="Ferro M.I.T."/>
            <person name="da Silva F.R."/>
            <person name="Goldman M.H.S."/>
            <person name="Goldman G.H."/>
            <person name="Lemos M.V.F."/>
            <person name="El-Dorry H."/>
            <person name="Tsai S.M."/>
            <person name="Carrer H."/>
            <person name="Carraro D.M."/>
            <person name="de Oliveira R.C."/>
            <person name="Nunes L.R."/>
            <person name="Siqueira W.J."/>
            <person name="Coutinho L.L."/>
            <person name="Kimura E.T."/>
            <person name="Ferro E.S."/>
            <person name="Harakava R."/>
            <person name="Kuramae E.E."/>
            <person name="Marino C.L."/>
            <person name="Giglioti E."/>
            <person name="Abreu I.L."/>
            <person name="Alves L.M.C."/>
            <person name="do Amaral A.M."/>
            <person name="Baia G.S."/>
            <person name="Blanco S.R."/>
            <person name="Brito M.S."/>
            <person name="Cannavan F.S."/>
            <person name="Celestino A.V."/>
            <person name="da Cunha A.F."/>
            <person name="Fenille R.C."/>
            <person name="Ferro J.A."/>
            <person name="Formighieri E.F."/>
            <person name="Kishi L.T."/>
            <person name="Leoni S.G."/>
            <person name="Oliveira A.R."/>
            <person name="Rosa V.E. Jr."/>
            <person name="Sassaki F.T."/>
            <person name="Sena J.A.D."/>
            <person name="de Souza A.A."/>
            <person name="Truffi D."/>
            <person name="Tsukumo F."/>
            <person name="Yanai G.M."/>
            <person name="Zaros L.G."/>
            <person name="Civerolo E.L."/>
            <person name="Simpson A.J.G."/>
            <person name="Almeida N.F. Jr."/>
            <person name="Setubal J.C."/>
            <person name="Kitajima J.P."/>
        </authorList>
    </citation>
    <scope>NUCLEOTIDE SEQUENCE [LARGE SCALE GENOMIC DNA]</scope>
    <source>
        <strain>Temecula1 / ATCC 700964</strain>
    </source>
</reference>
<gene>
    <name evidence="1" type="primary">miaB</name>
    <name type="ordered locus">PD_1779</name>
</gene>